<sequence>MRHYEIVFMVHPDQSEQVPGMIERYTGAITAAAGTIHRLEDWGRRQLAYPINKLHKAHYVLLNVEAPQEAIDELETNFRFNDAVIRSMVMRTKHAVTEASPMVKAKDERRERREDFANETADDSEAGDSEE</sequence>
<comment type="function">
    <text evidence="1">Binds together with bS18 to 16S ribosomal RNA.</text>
</comment>
<comment type="similarity">
    <text evidence="1">Belongs to the bacterial ribosomal protein bS6 family.</text>
</comment>
<proteinExistence type="inferred from homology"/>
<evidence type="ECO:0000255" key="1">
    <source>
        <dbReference type="HAMAP-Rule" id="MF_00360"/>
    </source>
</evidence>
<evidence type="ECO:0000256" key="2">
    <source>
        <dbReference type="SAM" id="MobiDB-lite"/>
    </source>
</evidence>
<evidence type="ECO:0000305" key="3"/>
<keyword id="KW-0687">Ribonucleoprotein</keyword>
<keyword id="KW-0689">Ribosomal protein</keyword>
<keyword id="KW-0694">RNA-binding</keyword>
<keyword id="KW-0699">rRNA-binding</keyword>
<dbReference type="EMBL" id="CP000964">
    <property type="protein sequence ID" value="ACI10195.1"/>
    <property type="molecule type" value="Genomic_DNA"/>
</dbReference>
<dbReference type="SMR" id="B5Y307"/>
<dbReference type="KEGG" id="kpe:KPK_5073"/>
<dbReference type="HOGENOM" id="CLU_113441_6_1_6"/>
<dbReference type="Proteomes" id="UP000001734">
    <property type="component" value="Chromosome"/>
</dbReference>
<dbReference type="GO" id="GO:0022627">
    <property type="term" value="C:cytosolic small ribosomal subunit"/>
    <property type="evidence" value="ECO:0007669"/>
    <property type="project" value="TreeGrafter"/>
</dbReference>
<dbReference type="GO" id="GO:0070181">
    <property type="term" value="F:small ribosomal subunit rRNA binding"/>
    <property type="evidence" value="ECO:0007669"/>
    <property type="project" value="TreeGrafter"/>
</dbReference>
<dbReference type="GO" id="GO:0003735">
    <property type="term" value="F:structural constituent of ribosome"/>
    <property type="evidence" value="ECO:0007669"/>
    <property type="project" value="InterPro"/>
</dbReference>
<dbReference type="GO" id="GO:0006412">
    <property type="term" value="P:translation"/>
    <property type="evidence" value="ECO:0007669"/>
    <property type="project" value="UniProtKB-UniRule"/>
</dbReference>
<dbReference type="CDD" id="cd00473">
    <property type="entry name" value="bS6"/>
    <property type="match status" value="1"/>
</dbReference>
<dbReference type="FunFam" id="3.30.70.60:FF:000003">
    <property type="entry name" value="30S ribosomal protein S6"/>
    <property type="match status" value="1"/>
</dbReference>
<dbReference type="Gene3D" id="3.30.70.60">
    <property type="match status" value="1"/>
</dbReference>
<dbReference type="HAMAP" id="MF_00360">
    <property type="entry name" value="Ribosomal_bS6"/>
    <property type="match status" value="1"/>
</dbReference>
<dbReference type="InterPro" id="IPR000529">
    <property type="entry name" value="Ribosomal_bS6"/>
</dbReference>
<dbReference type="InterPro" id="IPR020815">
    <property type="entry name" value="Ribosomal_bS6_CS"/>
</dbReference>
<dbReference type="InterPro" id="IPR035980">
    <property type="entry name" value="Ribosomal_bS6_sf"/>
</dbReference>
<dbReference type="InterPro" id="IPR020814">
    <property type="entry name" value="Ribosomal_S6_plastid/chlpt"/>
</dbReference>
<dbReference type="InterPro" id="IPR014717">
    <property type="entry name" value="Transl_elong_EF1B/ribsomal_bS6"/>
</dbReference>
<dbReference type="NCBIfam" id="TIGR00166">
    <property type="entry name" value="S6"/>
    <property type="match status" value="1"/>
</dbReference>
<dbReference type="PANTHER" id="PTHR21011">
    <property type="entry name" value="MITOCHONDRIAL 28S RIBOSOMAL PROTEIN S6"/>
    <property type="match status" value="1"/>
</dbReference>
<dbReference type="PANTHER" id="PTHR21011:SF1">
    <property type="entry name" value="SMALL RIBOSOMAL SUBUNIT PROTEIN BS6M"/>
    <property type="match status" value="1"/>
</dbReference>
<dbReference type="Pfam" id="PF01250">
    <property type="entry name" value="Ribosomal_S6"/>
    <property type="match status" value="1"/>
</dbReference>
<dbReference type="SUPFAM" id="SSF54995">
    <property type="entry name" value="Ribosomal protein S6"/>
    <property type="match status" value="1"/>
</dbReference>
<dbReference type="PROSITE" id="PS01048">
    <property type="entry name" value="RIBOSOMAL_S6"/>
    <property type="match status" value="1"/>
</dbReference>
<gene>
    <name evidence="1" type="primary">rpsF</name>
    <name type="ordered locus">KPK_5073</name>
</gene>
<protein>
    <recommendedName>
        <fullName evidence="1">Small ribosomal subunit protein bS6</fullName>
    </recommendedName>
    <alternativeName>
        <fullName evidence="3">30S ribosomal protein S6</fullName>
    </alternativeName>
</protein>
<reference key="1">
    <citation type="journal article" date="2008" name="PLoS Genet.">
        <title>Complete genome sequence of the N2-fixing broad host range endophyte Klebsiella pneumoniae 342 and virulence predictions verified in mice.</title>
        <authorList>
            <person name="Fouts D.E."/>
            <person name="Tyler H.L."/>
            <person name="DeBoy R.T."/>
            <person name="Daugherty S."/>
            <person name="Ren Q."/>
            <person name="Badger J.H."/>
            <person name="Durkin A.S."/>
            <person name="Huot H."/>
            <person name="Shrivastava S."/>
            <person name="Kothari S."/>
            <person name="Dodson R.J."/>
            <person name="Mohamoud Y."/>
            <person name="Khouri H."/>
            <person name="Roesch L.F.W."/>
            <person name="Krogfelt K.A."/>
            <person name="Struve C."/>
            <person name="Triplett E.W."/>
            <person name="Methe B.A."/>
        </authorList>
    </citation>
    <scope>NUCLEOTIDE SEQUENCE [LARGE SCALE GENOMIC DNA]</scope>
    <source>
        <strain>342</strain>
    </source>
</reference>
<organism>
    <name type="scientific">Klebsiella pneumoniae (strain 342)</name>
    <dbReference type="NCBI Taxonomy" id="507522"/>
    <lineage>
        <taxon>Bacteria</taxon>
        <taxon>Pseudomonadati</taxon>
        <taxon>Pseudomonadota</taxon>
        <taxon>Gammaproteobacteria</taxon>
        <taxon>Enterobacterales</taxon>
        <taxon>Enterobacteriaceae</taxon>
        <taxon>Klebsiella/Raoultella group</taxon>
        <taxon>Klebsiella</taxon>
        <taxon>Klebsiella pneumoniae complex</taxon>
    </lineage>
</organism>
<accession>B5Y307</accession>
<name>RS6_KLEP3</name>
<feature type="chain" id="PRO_1000120763" description="Small ribosomal subunit protein bS6">
    <location>
        <begin position="1"/>
        <end position="131"/>
    </location>
</feature>
<feature type="region of interest" description="Disordered" evidence="2">
    <location>
        <begin position="98"/>
        <end position="131"/>
    </location>
</feature>
<feature type="compositionally biased region" description="Basic and acidic residues" evidence="2">
    <location>
        <begin position="104"/>
        <end position="116"/>
    </location>
</feature>
<feature type="compositionally biased region" description="Acidic residues" evidence="2">
    <location>
        <begin position="120"/>
        <end position="131"/>
    </location>
</feature>